<proteinExistence type="evidence at protein level"/>
<gene>
    <name type="primary">ALP1</name>
    <name type="ordered locus">YNL270C</name>
    <name type="ORF">N0660</name>
</gene>
<evidence type="ECO:0000255" key="1"/>
<evidence type="ECO:0000256" key="2">
    <source>
        <dbReference type="SAM" id="MobiDB-lite"/>
    </source>
</evidence>
<evidence type="ECO:0000269" key="3">
    <source>
    </source>
</evidence>
<evidence type="ECO:0000305" key="4"/>
<protein>
    <recommendedName>
        <fullName>Basic amino-acid permease</fullName>
    </recommendedName>
</protein>
<accession>P38971</accession>
<accession>D6W0S4</accession>
<name>ALP1_YEAST</name>
<reference key="1">
    <citation type="journal article" date="1994" name="Yeast">
        <title>APL1, a yeast gene encoding a putative permease for basic amino acids.</title>
        <authorList>
            <person name="Sychrova H."/>
            <person name="Chevallier M.R."/>
        </authorList>
    </citation>
    <scope>NUCLEOTIDE SEQUENCE [GENOMIC DNA]</scope>
    <source>
        <strain>ATCC 28383 / FL100 / VTT C-80102</strain>
    </source>
</reference>
<reference key="2">
    <citation type="journal article" date="1996" name="Yeast">
        <title>The sequence of a 24,152 bp segment from the left arm of chromosome XIV from Saccharomyces cerevisiae between the BNI1 and the POL2 genes.</title>
        <authorList>
            <person name="Sen-Gupta M."/>
            <person name="Lyck R."/>
            <person name="Fleig U."/>
            <person name="Niedenthal R.K."/>
            <person name="Hegemann J.H."/>
        </authorList>
    </citation>
    <scope>NUCLEOTIDE SEQUENCE [GENOMIC DNA]</scope>
    <source>
        <strain>ATCC 96604 / S288c / FY1679</strain>
    </source>
</reference>
<reference key="3">
    <citation type="journal article" date="1997" name="Nature">
        <title>The nucleotide sequence of Saccharomyces cerevisiae chromosome XIV and its evolutionary implications.</title>
        <authorList>
            <person name="Philippsen P."/>
            <person name="Kleine K."/>
            <person name="Poehlmann R."/>
            <person name="Duesterhoeft A."/>
            <person name="Hamberg K."/>
            <person name="Hegemann J.H."/>
            <person name="Obermaier B."/>
            <person name="Urrestarazu L.A."/>
            <person name="Aert R."/>
            <person name="Albermann K."/>
            <person name="Altmann R."/>
            <person name="Andre B."/>
            <person name="Baladron V."/>
            <person name="Ballesta J.P.G."/>
            <person name="Becam A.-M."/>
            <person name="Beinhauer J.D."/>
            <person name="Boskovic J."/>
            <person name="Buitrago M.J."/>
            <person name="Bussereau F."/>
            <person name="Coster F."/>
            <person name="Crouzet M."/>
            <person name="D'Angelo M."/>
            <person name="Dal Pero F."/>
            <person name="De Antoni A."/>
            <person name="del Rey F."/>
            <person name="Doignon F."/>
            <person name="Domdey H."/>
            <person name="Dubois E."/>
            <person name="Fiedler T.A."/>
            <person name="Fleig U."/>
            <person name="Floeth M."/>
            <person name="Fritz C."/>
            <person name="Gaillardin C."/>
            <person name="Garcia-Cantalejo J.M."/>
            <person name="Glansdorff N."/>
            <person name="Goffeau A."/>
            <person name="Gueldener U."/>
            <person name="Herbert C.J."/>
            <person name="Heumann K."/>
            <person name="Heuss-Neitzel D."/>
            <person name="Hilbert H."/>
            <person name="Hinni K."/>
            <person name="Iraqui Houssaini I."/>
            <person name="Jacquet M."/>
            <person name="Jimenez A."/>
            <person name="Jonniaux J.-L."/>
            <person name="Karpfinger-Hartl L."/>
            <person name="Lanfranchi G."/>
            <person name="Lepingle A."/>
            <person name="Levesque H."/>
            <person name="Lyck R."/>
            <person name="Maftahi M."/>
            <person name="Mallet L."/>
            <person name="Maurer C.T.C."/>
            <person name="Messenguy F."/>
            <person name="Mewes H.-W."/>
            <person name="Moestl D."/>
            <person name="Nasr F."/>
            <person name="Nicaud J.-M."/>
            <person name="Niedenthal R.K."/>
            <person name="Pandolfo D."/>
            <person name="Pierard A."/>
            <person name="Piravandi E."/>
            <person name="Planta R.J."/>
            <person name="Pohl T.M."/>
            <person name="Purnelle B."/>
            <person name="Rebischung C."/>
            <person name="Remacha M.A."/>
            <person name="Revuelta J.L."/>
            <person name="Rinke M."/>
            <person name="Saiz J.E."/>
            <person name="Sartorello F."/>
            <person name="Scherens B."/>
            <person name="Sen-Gupta M."/>
            <person name="Soler-Mira A."/>
            <person name="Urbanus J.H.M."/>
            <person name="Valle G."/>
            <person name="Van Dyck L."/>
            <person name="Verhasselt P."/>
            <person name="Vierendeels F."/>
            <person name="Vissers S."/>
            <person name="Voet M."/>
            <person name="Volckaert G."/>
            <person name="Wach A."/>
            <person name="Wambutt R."/>
            <person name="Wedler H."/>
            <person name="Zollner A."/>
            <person name="Hani J."/>
        </authorList>
    </citation>
    <scope>NUCLEOTIDE SEQUENCE [LARGE SCALE GENOMIC DNA]</scope>
    <source>
        <strain>ATCC 204508 / S288c</strain>
    </source>
</reference>
<reference key="4">
    <citation type="journal article" date="2014" name="G3 (Bethesda)">
        <title>The reference genome sequence of Saccharomyces cerevisiae: Then and now.</title>
        <authorList>
            <person name="Engel S.R."/>
            <person name="Dietrich F.S."/>
            <person name="Fisk D.G."/>
            <person name="Binkley G."/>
            <person name="Balakrishnan R."/>
            <person name="Costanzo M.C."/>
            <person name="Dwight S.S."/>
            <person name="Hitz B.C."/>
            <person name="Karra K."/>
            <person name="Nash R.S."/>
            <person name="Weng S."/>
            <person name="Wong E.D."/>
            <person name="Lloyd P."/>
            <person name="Skrzypek M.S."/>
            <person name="Miyasato S.R."/>
            <person name="Simison M."/>
            <person name="Cherry J.M."/>
        </authorList>
    </citation>
    <scope>GENOME REANNOTATION</scope>
    <source>
        <strain>ATCC 204508 / S288c</strain>
    </source>
</reference>
<reference key="5">
    <citation type="journal article" date="1999" name="Curr. Genet.">
        <title>Substrate specificity and gene expression of the amino-acid permeases in Saccharomyces cerevisiae.</title>
        <authorList>
            <person name="Regenberg B."/>
            <person name="During-Olsen L."/>
            <person name="Kielland-Brandt M.C."/>
            <person name="Holmberg S."/>
        </authorList>
    </citation>
    <scope>FUNCTION</scope>
</reference>
<reference key="6">
    <citation type="journal article" date="2006" name="Proc. Natl. Acad. Sci. U.S.A.">
        <title>A global topology map of the Saccharomyces cerevisiae membrane proteome.</title>
        <authorList>
            <person name="Kim H."/>
            <person name="Melen K."/>
            <person name="Oesterberg M."/>
            <person name="von Heijne G."/>
        </authorList>
    </citation>
    <scope>TOPOLOGY [LARGE SCALE ANALYSIS]</scope>
    <source>
        <strain>ATCC 208353 / W303-1A</strain>
    </source>
</reference>
<comment type="function">
    <text evidence="3">High-affinity permease for basic amino acids.</text>
</comment>
<comment type="subcellular location">
    <subcellularLocation>
        <location>Membrane</location>
        <topology>Multi-pass membrane protein</topology>
    </subcellularLocation>
</comment>
<comment type="similarity">
    <text evidence="4">Belongs to the amino acid-polyamine-organocation (APC) superfamily. YAT (TC 2.A.3.10) family.</text>
</comment>
<organism>
    <name type="scientific">Saccharomyces cerevisiae (strain ATCC 204508 / S288c)</name>
    <name type="common">Baker's yeast</name>
    <dbReference type="NCBI Taxonomy" id="559292"/>
    <lineage>
        <taxon>Eukaryota</taxon>
        <taxon>Fungi</taxon>
        <taxon>Dikarya</taxon>
        <taxon>Ascomycota</taxon>
        <taxon>Saccharomycotina</taxon>
        <taxon>Saccharomycetes</taxon>
        <taxon>Saccharomycetales</taxon>
        <taxon>Saccharomycetaceae</taxon>
        <taxon>Saccharomyces</taxon>
    </lineage>
</organism>
<feature type="chain" id="PRO_0000054145" description="Basic amino-acid permease">
    <location>
        <begin position="1"/>
        <end position="573"/>
    </location>
</feature>
<feature type="topological domain" description="Cytoplasmic" evidence="1">
    <location>
        <begin position="1"/>
        <end position="73"/>
    </location>
</feature>
<feature type="transmembrane region" description="Helical" evidence="1">
    <location>
        <begin position="74"/>
        <end position="93"/>
    </location>
</feature>
<feature type="topological domain" description="Extracellular" evidence="1">
    <location>
        <begin position="94"/>
        <end position="95"/>
    </location>
</feature>
<feature type="transmembrane region" description="Helical" evidence="1">
    <location>
        <begin position="96"/>
        <end position="116"/>
    </location>
</feature>
<feature type="topological domain" description="Cytoplasmic" evidence="1">
    <location>
        <begin position="117"/>
        <end position="153"/>
    </location>
</feature>
<feature type="transmembrane region" description="Helical" evidence="1">
    <location>
        <begin position="154"/>
        <end position="174"/>
    </location>
</feature>
<feature type="topological domain" description="Extracellular" evidence="1">
    <location>
        <begin position="175"/>
        <end position="179"/>
    </location>
</feature>
<feature type="transmembrane region" description="Helical" evidence="1">
    <location>
        <begin position="180"/>
        <end position="200"/>
    </location>
</feature>
<feature type="topological domain" description="Cytoplasmic" evidence="1">
    <location>
        <begin position="201"/>
        <end position="209"/>
    </location>
</feature>
<feature type="transmembrane region" description="Helical" evidence="1">
    <location>
        <begin position="210"/>
        <end position="230"/>
    </location>
</feature>
<feature type="topological domain" description="Extracellular" evidence="1">
    <location>
        <begin position="231"/>
        <end position="265"/>
    </location>
</feature>
<feature type="transmembrane region" description="Helical" evidence="1">
    <location>
        <begin position="266"/>
        <end position="286"/>
    </location>
</feature>
<feature type="topological domain" description="Cytoplasmic" evidence="1">
    <location>
        <begin position="287"/>
        <end position="306"/>
    </location>
</feature>
<feature type="transmembrane region" description="Helical" evidence="1">
    <location>
        <begin position="307"/>
        <end position="327"/>
    </location>
</feature>
<feature type="topological domain" description="Extracellular" evidence="1">
    <location>
        <begin position="328"/>
        <end position="359"/>
    </location>
</feature>
<feature type="transmembrane region" description="Helical" evidence="1">
    <location>
        <begin position="360"/>
        <end position="380"/>
    </location>
</feature>
<feature type="topological domain" description="Cytoplasmic" evidence="1">
    <location>
        <begin position="381"/>
        <end position="403"/>
    </location>
</feature>
<feature type="transmembrane region" description="Helical" evidence="1">
    <location>
        <begin position="404"/>
        <end position="424"/>
    </location>
</feature>
<feature type="topological domain" description="Extracellular" evidence="1">
    <location>
        <begin position="425"/>
        <end position="431"/>
    </location>
</feature>
<feature type="transmembrane region" description="Helical" evidence="1">
    <location>
        <begin position="432"/>
        <end position="452"/>
    </location>
</feature>
<feature type="topological domain" description="Cytoplasmic" evidence="1">
    <location>
        <begin position="453"/>
        <end position="477"/>
    </location>
</feature>
<feature type="transmembrane region" description="Helical" evidence="1">
    <location>
        <begin position="478"/>
        <end position="498"/>
    </location>
</feature>
<feature type="topological domain" description="Extracellular" evidence="1">
    <location>
        <begin position="499"/>
        <end position="510"/>
    </location>
</feature>
<feature type="transmembrane region" description="Helical" evidence="1">
    <location>
        <begin position="511"/>
        <end position="531"/>
    </location>
</feature>
<feature type="topological domain" description="Cytoplasmic" evidence="1">
    <location>
        <begin position="532"/>
        <end position="573"/>
    </location>
</feature>
<feature type="region of interest" description="Disordered" evidence="2">
    <location>
        <begin position="40"/>
        <end position="66"/>
    </location>
</feature>
<feature type="compositionally biased region" description="Basic and acidic residues" evidence="2">
    <location>
        <begin position="43"/>
        <end position="65"/>
    </location>
</feature>
<feature type="sequence conflict" description="In Ref. 1; CAA52199." evidence="4" ref="1">
    <original>D</original>
    <variation>DD</variation>
    <location>
        <position position="51"/>
    </location>
</feature>
<feature type="sequence conflict" description="In Ref. 1; CAA52199." evidence="4" ref="1">
    <original>V</original>
    <variation>A</variation>
    <location>
        <position position="126"/>
    </location>
</feature>
<feature type="sequence conflict" description="In Ref. 1; CAA52199." evidence="4" ref="1">
    <original>D</original>
    <variation>N</variation>
    <location>
        <position position="260"/>
    </location>
</feature>
<feature type="sequence conflict" description="In Ref. 1; CAA52199." evidence="4" ref="1">
    <original>I</original>
    <variation>V</variation>
    <location>
        <position position="517"/>
    </location>
</feature>
<feature type="sequence conflict" description="In Ref. 1; CAA52199." evidence="4" ref="1">
    <original>R</original>
    <variation>H</variation>
    <location>
        <position position="548"/>
    </location>
</feature>
<sequence length="573" mass="64014">MDETVNIQMSKEGQYEINSSSIIKEEEFVDEQYSGENVTKAITTERKVEDDAAKETESSPQERREVKRKLKQRHIGMIALGGTIGTGLIIGIGPPLAHAGPVGALISYLFMGTVIYSVTQSLGEMVTFIPVTSSFSVFAQRFLSPALGATNGYMYWLSWCFTFALELSVLGKVIQYWTEAVPLAAWIVIFWCLLTSMNMFPVKYYGEFEFCIASIKVIALLGFIIFSFCVVCGAGQSDGPIGFRYWRNPGAWGPGIISSDKNEGRFLGWVSSLINAAFTYQGTELVGITAGEAANPRKALPRAIKKVVVRILVFYILSLFFIGLLVPYNDPKLDSDGIFVSSSPFMISIENSGTKVLPDIFNAVVLITILSAGNSNVYIGSRVLYSLSKNSLAPRFLSNVTRGGVPYFSVLSTSVFGFLAFLEVSAGSGKAFNWLLNITGVAGFFAWLLISFSHIRFMQAIRKRGISRDDLPYKAQMMPFLAYYASFFIALIVLIQGFTAFAPTFQPIDFVAAYISIFLFLAIWLSFQVWFKCRLLWKLQDIDIDSDRRQIEELVWIEPECKTRWQRVWDVLS</sequence>
<dbReference type="EMBL" id="X74069">
    <property type="protein sequence ID" value="CAA52199.1"/>
    <property type="molecule type" value="Genomic_DNA"/>
</dbReference>
<dbReference type="EMBL" id="X92494">
    <property type="protein sequence ID" value="CAA63228.1"/>
    <property type="molecule type" value="Genomic_DNA"/>
</dbReference>
<dbReference type="EMBL" id="Z71546">
    <property type="protein sequence ID" value="CAA96177.1"/>
    <property type="molecule type" value="Genomic_DNA"/>
</dbReference>
<dbReference type="EMBL" id="BK006947">
    <property type="protein sequence ID" value="DAA10290.1"/>
    <property type="molecule type" value="Genomic_DNA"/>
</dbReference>
<dbReference type="PIR" id="S60912">
    <property type="entry name" value="S60912"/>
</dbReference>
<dbReference type="RefSeq" id="NP_014129.1">
    <property type="nucleotide sequence ID" value="NM_001183108.1"/>
</dbReference>
<dbReference type="SMR" id="P38971"/>
<dbReference type="BioGRID" id="35570">
    <property type="interactions" value="69"/>
</dbReference>
<dbReference type="FunCoup" id="P38971">
    <property type="interactions" value="174"/>
</dbReference>
<dbReference type="IntAct" id="P38971">
    <property type="interactions" value="1"/>
</dbReference>
<dbReference type="STRING" id="4932.YNL270C"/>
<dbReference type="TCDB" id="2.A.3.10.11">
    <property type="family name" value="the amino acid-polyamine-organocation (apc) family"/>
</dbReference>
<dbReference type="PaxDb" id="4932-YNL270C"/>
<dbReference type="PeptideAtlas" id="P38971"/>
<dbReference type="TopDownProteomics" id="P38971"/>
<dbReference type="EnsemblFungi" id="YNL270C_mRNA">
    <property type="protein sequence ID" value="YNL270C"/>
    <property type="gene ID" value="YNL270C"/>
</dbReference>
<dbReference type="GeneID" id="855451"/>
<dbReference type="KEGG" id="sce:YNL270C"/>
<dbReference type="AGR" id="SGD:S000005214"/>
<dbReference type="SGD" id="S000005214">
    <property type="gene designation" value="ALP1"/>
</dbReference>
<dbReference type="VEuPathDB" id="FungiDB:YNL270C"/>
<dbReference type="eggNOG" id="KOG1286">
    <property type="taxonomic scope" value="Eukaryota"/>
</dbReference>
<dbReference type="GeneTree" id="ENSGT00940000176760"/>
<dbReference type="HOGENOM" id="CLU_007946_12_1_1"/>
<dbReference type="InParanoid" id="P38971"/>
<dbReference type="OMA" id="TEEKHSH"/>
<dbReference type="OrthoDB" id="3900342at2759"/>
<dbReference type="BioCyc" id="YEAST:G3O-33264-MONOMER"/>
<dbReference type="BioGRID-ORCS" id="855451">
    <property type="hits" value="0 hits in 10 CRISPR screens"/>
</dbReference>
<dbReference type="PRO" id="PR:P38971"/>
<dbReference type="Proteomes" id="UP000002311">
    <property type="component" value="Chromosome XIV"/>
</dbReference>
<dbReference type="RNAct" id="P38971">
    <property type="molecule type" value="protein"/>
</dbReference>
<dbReference type="GO" id="GO:0005783">
    <property type="term" value="C:endoplasmic reticulum"/>
    <property type="evidence" value="ECO:0007005"/>
    <property type="project" value="SGD"/>
</dbReference>
<dbReference type="GO" id="GO:0016020">
    <property type="term" value="C:membrane"/>
    <property type="evidence" value="ECO:0000318"/>
    <property type="project" value="GO_Central"/>
</dbReference>
<dbReference type="GO" id="GO:0015171">
    <property type="term" value="F:amino acid transmembrane transporter activity"/>
    <property type="evidence" value="ECO:0000318"/>
    <property type="project" value="GO_Central"/>
</dbReference>
<dbReference type="GO" id="GO:0015174">
    <property type="term" value="F:basic amino acid transmembrane transporter activity"/>
    <property type="evidence" value="ECO:0000314"/>
    <property type="project" value="SGD"/>
</dbReference>
<dbReference type="GO" id="GO:0003333">
    <property type="term" value="P:amino acid transmembrane transport"/>
    <property type="evidence" value="ECO:0000318"/>
    <property type="project" value="GO_Central"/>
</dbReference>
<dbReference type="GO" id="GO:0015802">
    <property type="term" value="P:basic amino acid transport"/>
    <property type="evidence" value="ECO:0000314"/>
    <property type="project" value="SGD"/>
</dbReference>
<dbReference type="FunFam" id="1.20.1740.10:FF:000006">
    <property type="entry name" value="General amino acid permease"/>
    <property type="match status" value="1"/>
</dbReference>
<dbReference type="Gene3D" id="1.20.1740.10">
    <property type="entry name" value="Amino acid/polyamine transporter I"/>
    <property type="match status" value="1"/>
</dbReference>
<dbReference type="InterPro" id="IPR004841">
    <property type="entry name" value="AA-permease/SLC12A_dom"/>
</dbReference>
<dbReference type="InterPro" id="IPR004840">
    <property type="entry name" value="Amino_acid_permease_CS"/>
</dbReference>
<dbReference type="InterPro" id="IPR004762">
    <property type="entry name" value="Amino_acid_permease_fungi"/>
</dbReference>
<dbReference type="InterPro" id="IPR050524">
    <property type="entry name" value="APC_YAT"/>
</dbReference>
<dbReference type="NCBIfam" id="TIGR00913">
    <property type="entry name" value="2A0310"/>
    <property type="match status" value="1"/>
</dbReference>
<dbReference type="PANTHER" id="PTHR43341">
    <property type="entry name" value="AMINO ACID PERMEASE"/>
    <property type="match status" value="1"/>
</dbReference>
<dbReference type="PANTHER" id="PTHR43341:SF4">
    <property type="entry name" value="ARGININE PERMEASE CAN1-RELATED"/>
    <property type="match status" value="1"/>
</dbReference>
<dbReference type="Pfam" id="PF00324">
    <property type="entry name" value="AA_permease"/>
    <property type="match status" value="1"/>
</dbReference>
<dbReference type="PIRSF" id="PIRSF006060">
    <property type="entry name" value="AA_transporter"/>
    <property type="match status" value="1"/>
</dbReference>
<dbReference type="PROSITE" id="PS00218">
    <property type="entry name" value="AMINO_ACID_PERMEASE_1"/>
    <property type="match status" value="1"/>
</dbReference>
<keyword id="KW-0029">Amino-acid transport</keyword>
<keyword id="KW-0472">Membrane</keyword>
<keyword id="KW-1185">Reference proteome</keyword>
<keyword id="KW-0812">Transmembrane</keyword>
<keyword id="KW-1133">Transmembrane helix</keyword>
<keyword id="KW-0813">Transport</keyword>